<feature type="chain" id="PRO_1000060256" description="ATP-dependent Clp protease proteolytic subunit">
    <location>
        <begin position="1"/>
        <end position="195"/>
    </location>
</feature>
<feature type="active site" description="Nucleophile" evidence="1">
    <location>
        <position position="98"/>
    </location>
</feature>
<feature type="active site" evidence="1">
    <location>
        <position position="123"/>
    </location>
</feature>
<protein>
    <recommendedName>
        <fullName evidence="1">ATP-dependent Clp protease proteolytic subunit</fullName>
        <ecNumber evidence="1">3.4.21.92</ecNumber>
    </recommendedName>
    <alternativeName>
        <fullName evidence="1">Endopeptidase Clp</fullName>
    </alternativeName>
</protein>
<accession>A8MIS8</accession>
<proteinExistence type="inferred from homology"/>
<dbReference type="EC" id="3.4.21.92" evidence="1"/>
<dbReference type="EMBL" id="CP000853">
    <property type="protein sequence ID" value="ABW19710.1"/>
    <property type="molecule type" value="Genomic_DNA"/>
</dbReference>
<dbReference type="RefSeq" id="WP_012160019.1">
    <property type="nucleotide sequence ID" value="NC_009922.1"/>
</dbReference>
<dbReference type="SMR" id="A8MIS8"/>
<dbReference type="STRING" id="350688.Clos_2174"/>
<dbReference type="MEROPS" id="S14.001"/>
<dbReference type="KEGG" id="aoe:Clos_2174"/>
<dbReference type="eggNOG" id="COG0740">
    <property type="taxonomic scope" value="Bacteria"/>
</dbReference>
<dbReference type="HOGENOM" id="CLU_058707_3_2_9"/>
<dbReference type="OrthoDB" id="9802800at2"/>
<dbReference type="Proteomes" id="UP000000269">
    <property type="component" value="Chromosome"/>
</dbReference>
<dbReference type="GO" id="GO:0005737">
    <property type="term" value="C:cytoplasm"/>
    <property type="evidence" value="ECO:0007669"/>
    <property type="project" value="UniProtKB-SubCell"/>
</dbReference>
<dbReference type="GO" id="GO:0009368">
    <property type="term" value="C:endopeptidase Clp complex"/>
    <property type="evidence" value="ECO:0007669"/>
    <property type="project" value="TreeGrafter"/>
</dbReference>
<dbReference type="GO" id="GO:0004176">
    <property type="term" value="F:ATP-dependent peptidase activity"/>
    <property type="evidence" value="ECO:0007669"/>
    <property type="project" value="InterPro"/>
</dbReference>
<dbReference type="GO" id="GO:0051117">
    <property type="term" value="F:ATPase binding"/>
    <property type="evidence" value="ECO:0007669"/>
    <property type="project" value="TreeGrafter"/>
</dbReference>
<dbReference type="GO" id="GO:0004252">
    <property type="term" value="F:serine-type endopeptidase activity"/>
    <property type="evidence" value="ECO:0007669"/>
    <property type="project" value="UniProtKB-UniRule"/>
</dbReference>
<dbReference type="GO" id="GO:0006515">
    <property type="term" value="P:protein quality control for misfolded or incompletely synthesized proteins"/>
    <property type="evidence" value="ECO:0007669"/>
    <property type="project" value="TreeGrafter"/>
</dbReference>
<dbReference type="CDD" id="cd07017">
    <property type="entry name" value="S14_ClpP_2"/>
    <property type="match status" value="1"/>
</dbReference>
<dbReference type="FunFam" id="3.90.226.10:FF:000001">
    <property type="entry name" value="ATP-dependent Clp protease proteolytic subunit"/>
    <property type="match status" value="1"/>
</dbReference>
<dbReference type="Gene3D" id="3.90.226.10">
    <property type="entry name" value="2-enoyl-CoA Hydratase, Chain A, domain 1"/>
    <property type="match status" value="1"/>
</dbReference>
<dbReference type="HAMAP" id="MF_00444">
    <property type="entry name" value="ClpP"/>
    <property type="match status" value="1"/>
</dbReference>
<dbReference type="InterPro" id="IPR001907">
    <property type="entry name" value="ClpP"/>
</dbReference>
<dbReference type="InterPro" id="IPR029045">
    <property type="entry name" value="ClpP/crotonase-like_dom_sf"/>
</dbReference>
<dbReference type="InterPro" id="IPR023562">
    <property type="entry name" value="ClpP/TepA"/>
</dbReference>
<dbReference type="InterPro" id="IPR033135">
    <property type="entry name" value="ClpP_His_AS"/>
</dbReference>
<dbReference type="InterPro" id="IPR018215">
    <property type="entry name" value="ClpP_Ser_AS"/>
</dbReference>
<dbReference type="NCBIfam" id="TIGR00493">
    <property type="entry name" value="clpP"/>
    <property type="match status" value="1"/>
</dbReference>
<dbReference type="NCBIfam" id="NF001368">
    <property type="entry name" value="PRK00277.1"/>
    <property type="match status" value="1"/>
</dbReference>
<dbReference type="NCBIfam" id="NF009205">
    <property type="entry name" value="PRK12553.1"/>
    <property type="match status" value="1"/>
</dbReference>
<dbReference type="PANTHER" id="PTHR10381">
    <property type="entry name" value="ATP-DEPENDENT CLP PROTEASE PROTEOLYTIC SUBUNIT"/>
    <property type="match status" value="1"/>
</dbReference>
<dbReference type="PANTHER" id="PTHR10381:SF70">
    <property type="entry name" value="ATP-DEPENDENT CLP PROTEASE PROTEOLYTIC SUBUNIT"/>
    <property type="match status" value="1"/>
</dbReference>
<dbReference type="Pfam" id="PF00574">
    <property type="entry name" value="CLP_protease"/>
    <property type="match status" value="1"/>
</dbReference>
<dbReference type="PRINTS" id="PR00127">
    <property type="entry name" value="CLPPROTEASEP"/>
</dbReference>
<dbReference type="SUPFAM" id="SSF52096">
    <property type="entry name" value="ClpP/crotonase"/>
    <property type="match status" value="1"/>
</dbReference>
<dbReference type="PROSITE" id="PS00382">
    <property type="entry name" value="CLP_PROTEASE_HIS"/>
    <property type="match status" value="1"/>
</dbReference>
<dbReference type="PROSITE" id="PS00381">
    <property type="entry name" value="CLP_PROTEASE_SER"/>
    <property type="match status" value="1"/>
</dbReference>
<gene>
    <name evidence="1" type="primary">clpP</name>
    <name type="ordered locus">Clos_2174</name>
</gene>
<evidence type="ECO:0000255" key="1">
    <source>
        <dbReference type="HAMAP-Rule" id="MF_00444"/>
    </source>
</evidence>
<organism>
    <name type="scientific">Alkaliphilus oremlandii (strain OhILAs)</name>
    <name type="common">Clostridium oremlandii (strain OhILAs)</name>
    <dbReference type="NCBI Taxonomy" id="350688"/>
    <lineage>
        <taxon>Bacteria</taxon>
        <taxon>Bacillati</taxon>
        <taxon>Bacillota</taxon>
        <taxon>Clostridia</taxon>
        <taxon>Peptostreptococcales</taxon>
        <taxon>Natronincolaceae</taxon>
        <taxon>Alkaliphilus</taxon>
    </lineage>
</organism>
<sequence length="195" mass="21759">MALVPMVVEQTNRGERSYDIYSRLLKERIIFLSDEVNDATASLVVAQLLFLESEDPDKDIQLYINSPGGSITAGMAIYDTMNYIKPDVSTICIGMAASMGAFLLTAGQKGKRFALPNAEIMIHQPLGGTRGQAEDIRIHTERILKMRETLNKIIAERTGQPLEKVQKDTDRDFFMEAEEARAYGIIDEVITTAKK</sequence>
<reference key="1">
    <citation type="submission" date="2007-10" db="EMBL/GenBank/DDBJ databases">
        <title>Complete genome of Alkaliphilus oremlandii OhILAs.</title>
        <authorList>
            <person name="Copeland A."/>
            <person name="Lucas S."/>
            <person name="Lapidus A."/>
            <person name="Barry K."/>
            <person name="Detter J.C."/>
            <person name="Glavina del Rio T."/>
            <person name="Hammon N."/>
            <person name="Israni S."/>
            <person name="Dalin E."/>
            <person name="Tice H."/>
            <person name="Pitluck S."/>
            <person name="Chain P."/>
            <person name="Malfatti S."/>
            <person name="Shin M."/>
            <person name="Vergez L."/>
            <person name="Schmutz J."/>
            <person name="Larimer F."/>
            <person name="Land M."/>
            <person name="Hauser L."/>
            <person name="Kyrpides N."/>
            <person name="Mikhailova N."/>
            <person name="Stolz J.F."/>
            <person name="Dawson A."/>
            <person name="Fisher E."/>
            <person name="Crable B."/>
            <person name="Perera E."/>
            <person name="Lisak J."/>
            <person name="Ranganathan M."/>
            <person name="Basu P."/>
            <person name="Richardson P."/>
        </authorList>
    </citation>
    <scope>NUCLEOTIDE SEQUENCE [LARGE SCALE GENOMIC DNA]</scope>
    <source>
        <strain>OhILAs</strain>
    </source>
</reference>
<comment type="function">
    <text evidence="1">Cleaves peptides in various proteins in a process that requires ATP hydrolysis. Has a chymotrypsin-like activity. Plays a major role in the degradation of misfolded proteins.</text>
</comment>
<comment type="catalytic activity">
    <reaction evidence="1">
        <text>Hydrolysis of proteins to small peptides in the presence of ATP and magnesium. alpha-casein is the usual test substrate. In the absence of ATP, only oligopeptides shorter than five residues are hydrolyzed (such as succinyl-Leu-Tyr-|-NHMec, and Leu-Tyr-Leu-|-Tyr-Trp, in which cleavage of the -Tyr-|-Leu- and -Tyr-|-Trp bonds also occurs).</text>
        <dbReference type="EC" id="3.4.21.92"/>
    </reaction>
</comment>
<comment type="subunit">
    <text evidence="1">Fourteen ClpP subunits assemble into 2 heptameric rings which stack back to back to give a disk-like structure with a central cavity, resembling the structure of eukaryotic proteasomes.</text>
</comment>
<comment type="subcellular location">
    <subcellularLocation>
        <location evidence="1">Cytoplasm</location>
    </subcellularLocation>
</comment>
<comment type="similarity">
    <text evidence="1">Belongs to the peptidase S14 family.</text>
</comment>
<name>CLPP_ALKOO</name>
<keyword id="KW-0963">Cytoplasm</keyword>
<keyword id="KW-0378">Hydrolase</keyword>
<keyword id="KW-0645">Protease</keyword>
<keyword id="KW-1185">Reference proteome</keyword>
<keyword id="KW-0720">Serine protease</keyword>